<name>RHP9_SCHPO</name>
<dbReference type="EMBL" id="Y09431">
    <property type="protein sequence ID" value="CAA70582.1"/>
    <property type="molecule type" value="Genomic_DNA"/>
</dbReference>
<dbReference type="EMBL" id="D86478">
    <property type="protein sequence ID" value="BAA13093.1"/>
    <property type="molecule type" value="Genomic_DNA"/>
</dbReference>
<dbReference type="EMBL" id="CU329671">
    <property type="protein sequence ID" value="CAB46775.1"/>
    <property type="molecule type" value="Genomic_DNA"/>
</dbReference>
<dbReference type="PIR" id="T43223">
    <property type="entry name" value="T43223"/>
</dbReference>
<dbReference type="PIR" id="T45221">
    <property type="entry name" value="T45221"/>
</dbReference>
<dbReference type="RefSeq" id="NP_596748.1">
    <property type="nucleotide sequence ID" value="NM_001023768.2"/>
</dbReference>
<dbReference type="PDB" id="2FHD">
    <property type="method" value="X-ray"/>
    <property type="resolution" value="2.40 A"/>
    <property type="chains" value="A/B/C=358-507"/>
</dbReference>
<dbReference type="PDB" id="2VXB">
    <property type="method" value="X-ray"/>
    <property type="resolution" value="2.30 A"/>
    <property type="chains" value="A/B=538-778"/>
</dbReference>
<dbReference type="PDB" id="2VXC">
    <property type="method" value="X-ray"/>
    <property type="resolution" value="3.10 A"/>
    <property type="chains" value="A/B=537-778"/>
</dbReference>
<dbReference type="PDB" id="4BU0">
    <property type="method" value="X-ray"/>
    <property type="resolution" value="1.50 A"/>
    <property type="chains" value="B/C=180-193"/>
</dbReference>
<dbReference type="PDB" id="4BU1">
    <property type="method" value="X-ray"/>
    <property type="resolution" value="2.10 A"/>
    <property type="chains" value="C/D=229-241"/>
</dbReference>
<dbReference type="PDBsum" id="2FHD"/>
<dbReference type="PDBsum" id="2VXB"/>
<dbReference type="PDBsum" id="2VXC"/>
<dbReference type="PDBsum" id="4BU0"/>
<dbReference type="PDBsum" id="4BU1"/>
<dbReference type="SMR" id="P87074"/>
<dbReference type="BioGRID" id="277508">
    <property type="interactions" value="120"/>
</dbReference>
<dbReference type="FunCoup" id="P87074">
    <property type="interactions" value="278"/>
</dbReference>
<dbReference type="IntAct" id="P87074">
    <property type="interactions" value="7"/>
</dbReference>
<dbReference type="STRING" id="284812.P87074"/>
<dbReference type="iPTMnet" id="P87074"/>
<dbReference type="PaxDb" id="4896-SPBC342.05.1"/>
<dbReference type="EnsemblFungi" id="SPBC342.05.1">
    <property type="protein sequence ID" value="SPBC342.05.1:pep"/>
    <property type="gene ID" value="SPBC342.05"/>
</dbReference>
<dbReference type="GeneID" id="2540992"/>
<dbReference type="KEGG" id="spo:2540992"/>
<dbReference type="PomBase" id="SPBC342.05">
    <property type="gene designation" value="crb2"/>
</dbReference>
<dbReference type="VEuPathDB" id="FungiDB:SPBC342.05"/>
<dbReference type="eggNOG" id="KOG3548">
    <property type="taxonomic scope" value="Eukaryota"/>
</dbReference>
<dbReference type="HOGENOM" id="CLU_351305_0_0_1"/>
<dbReference type="InParanoid" id="P87074"/>
<dbReference type="OMA" id="FEWIIEC"/>
<dbReference type="PhylomeDB" id="P87074"/>
<dbReference type="Reactome" id="R-SPO-3232118">
    <property type="pathway name" value="SUMOylation of transcription factors"/>
</dbReference>
<dbReference type="Reactome" id="R-SPO-5693565">
    <property type="pathway name" value="Recruitment and ATM-mediated phosphorylation of repair and signaling proteins at DNA double strand breaks"/>
</dbReference>
<dbReference type="EvolutionaryTrace" id="P87074"/>
<dbReference type="PRO" id="PR:P87074"/>
<dbReference type="Proteomes" id="UP000002485">
    <property type="component" value="Chromosome II"/>
</dbReference>
<dbReference type="GO" id="GO:0000785">
    <property type="term" value="C:chromatin"/>
    <property type="evidence" value="ECO:0000314"/>
    <property type="project" value="PomBase"/>
</dbReference>
<dbReference type="GO" id="GO:0005634">
    <property type="term" value="C:nucleus"/>
    <property type="evidence" value="ECO:0000314"/>
    <property type="project" value="PomBase"/>
</dbReference>
<dbReference type="GO" id="GO:0035861">
    <property type="term" value="C:site of double-strand break"/>
    <property type="evidence" value="ECO:0000314"/>
    <property type="project" value="PomBase"/>
</dbReference>
<dbReference type="GO" id="GO:0140463">
    <property type="term" value="F:chromatin-protein adaptor activity"/>
    <property type="evidence" value="ECO:0000353"/>
    <property type="project" value="PomBase"/>
</dbReference>
<dbReference type="GO" id="GO:0042393">
    <property type="term" value="F:histone binding"/>
    <property type="evidence" value="ECO:0000353"/>
    <property type="project" value="PomBase"/>
</dbReference>
<dbReference type="GO" id="GO:0042802">
    <property type="term" value="F:identical protein binding"/>
    <property type="evidence" value="ECO:0000353"/>
    <property type="project" value="IntAct"/>
</dbReference>
<dbReference type="GO" id="GO:0035064">
    <property type="term" value="F:methylated histone binding"/>
    <property type="evidence" value="ECO:0000269"/>
    <property type="project" value="PomBase"/>
</dbReference>
<dbReference type="GO" id="GO:0000077">
    <property type="term" value="P:DNA damage checkpoint signaling"/>
    <property type="evidence" value="ECO:0000315"/>
    <property type="project" value="PomBase"/>
</dbReference>
<dbReference type="GO" id="GO:0044773">
    <property type="term" value="P:mitotic DNA damage checkpoint signaling"/>
    <property type="evidence" value="ECO:0000315"/>
    <property type="project" value="PomBase"/>
</dbReference>
<dbReference type="GO" id="GO:0033314">
    <property type="term" value="P:mitotic DNA replication checkpoint signaling"/>
    <property type="evidence" value="ECO:0000315"/>
    <property type="project" value="PomBase"/>
</dbReference>
<dbReference type="GO" id="GO:0007095">
    <property type="term" value="P:mitotic G2 DNA damage checkpoint signaling"/>
    <property type="evidence" value="ECO:0000314"/>
    <property type="project" value="PomBase"/>
</dbReference>
<dbReference type="GO" id="GO:0008156">
    <property type="term" value="P:negative regulation of DNA replication"/>
    <property type="evidence" value="ECO:0007669"/>
    <property type="project" value="UniProtKB-KW"/>
</dbReference>
<dbReference type="GO" id="GO:0010569">
    <property type="term" value="P:regulation of double-strand break repair via homologous recombination"/>
    <property type="evidence" value="ECO:0000316"/>
    <property type="project" value="PomBase"/>
</dbReference>
<dbReference type="CDD" id="cd17745">
    <property type="entry name" value="BRCT_p53bp1_rpt1"/>
    <property type="match status" value="1"/>
</dbReference>
<dbReference type="CDD" id="cd20395">
    <property type="entry name" value="Tudor_SpCrb2-like_rpt1"/>
    <property type="match status" value="1"/>
</dbReference>
<dbReference type="CDD" id="cd20396">
    <property type="entry name" value="Tudor_SpCrb2-like_rpt2"/>
    <property type="match status" value="1"/>
</dbReference>
<dbReference type="FunFam" id="2.30.30.140:FF:000141">
    <property type="entry name" value="DNA damage repair protein (Rad9)"/>
    <property type="match status" value="1"/>
</dbReference>
<dbReference type="FunFam" id="3.40.50.10190:FF:000083">
    <property type="entry name" value="DNA damage repair protein (Rad9)"/>
    <property type="match status" value="1"/>
</dbReference>
<dbReference type="Gene3D" id="2.30.30.140">
    <property type="match status" value="1"/>
</dbReference>
<dbReference type="Gene3D" id="2.30.30.810">
    <property type="match status" value="1"/>
</dbReference>
<dbReference type="Gene3D" id="3.40.50.10190">
    <property type="entry name" value="BRCT domain"/>
    <property type="match status" value="2"/>
</dbReference>
<dbReference type="InterPro" id="IPR001357">
    <property type="entry name" value="BRCT_dom"/>
</dbReference>
<dbReference type="InterPro" id="IPR036420">
    <property type="entry name" value="BRCT_dom_sf"/>
</dbReference>
<dbReference type="InterPro" id="IPR047249">
    <property type="entry name" value="BRCT_p53bp1-like_rpt1"/>
</dbReference>
<dbReference type="InterPro" id="IPR041297">
    <property type="entry name" value="Crb2_Tudor"/>
</dbReference>
<dbReference type="InterPro" id="IPR055249">
    <property type="entry name" value="Crb2_Tudor_schizosaccharomyces"/>
</dbReference>
<dbReference type="InterPro" id="IPR047252">
    <property type="entry name" value="TP53BP1-like"/>
</dbReference>
<dbReference type="PANTHER" id="PTHR15321:SF3">
    <property type="entry name" value="TP53-BINDING PROTEIN 1"/>
    <property type="match status" value="1"/>
</dbReference>
<dbReference type="PANTHER" id="PTHR15321">
    <property type="entry name" value="TUMOR SUPPRESSOR P53-BINDING PROTEIN 1"/>
    <property type="match status" value="1"/>
</dbReference>
<dbReference type="Pfam" id="PF00533">
    <property type="entry name" value="BRCT"/>
    <property type="match status" value="1"/>
</dbReference>
<dbReference type="Pfam" id="PF22395">
    <property type="entry name" value="Crb2-like_BRCT-like"/>
    <property type="match status" value="1"/>
</dbReference>
<dbReference type="Pfam" id="PF22520">
    <property type="entry name" value="Crb2_Tudor"/>
    <property type="match status" value="1"/>
</dbReference>
<dbReference type="Pfam" id="PF18115">
    <property type="entry name" value="Tudor_3"/>
    <property type="match status" value="1"/>
</dbReference>
<dbReference type="SMART" id="SM00292">
    <property type="entry name" value="BRCT"/>
    <property type="match status" value="1"/>
</dbReference>
<dbReference type="SUPFAM" id="SSF52113">
    <property type="entry name" value="BRCT domain"/>
    <property type="match status" value="1"/>
</dbReference>
<dbReference type="PROSITE" id="PS50172">
    <property type="entry name" value="BRCT"/>
    <property type="match status" value="2"/>
</dbReference>
<accession>P87074</accession>
<accession>Q09754</accession>
<feature type="chain" id="PRO_0000097328" description="DNA repair protein crb2">
    <location>
        <begin position="1"/>
        <end position="778"/>
    </location>
</feature>
<feature type="domain" description="BRCT" evidence="1">
    <location>
        <begin position="535"/>
        <end position="653"/>
    </location>
</feature>
<feature type="region of interest" description="Disordered" evidence="2">
    <location>
        <begin position="35"/>
        <end position="56"/>
    </location>
</feature>
<feature type="region of interest" description="Interaction with rad4" evidence="8">
    <location>
        <begin position="141"/>
        <end position="245"/>
    </location>
</feature>
<feature type="region of interest" description="Tudor-like" evidence="22">
    <location>
        <begin position="358"/>
        <end position="493"/>
    </location>
</feature>
<feature type="region of interest" description="Interaction with dimethylated histone H4" evidence="22">
    <location>
        <begin position="370"/>
        <end position="404"/>
    </location>
</feature>
<feature type="modified residue" description="Phosphothreonine; by ATM" evidence="23">
    <location>
        <position position="73"/>
    </location>
</feature>
<feature type="modified residue" description="Phosphoserine; by ATM" evidence="13">
    <location>
        <position position="80"/>
    </location>
</feature>
<feature type="modified residue" description="Phosphothreonine" evidence="14">
    <location>
        <position position="187"/>
    </location>
</feature>
<feature type="modified residue" description="Phosphothreonine; by cdc2" evidence="3 7 14">
    <location>
        <position position="215"/>
    </location>
</feature>
<feature type="modified residue" description="Phosphothreonine" evidence="14">
    <location>
        <position position="235"/>
    </location>
</feature>
<feature type="mutagenesis site" description="In crb2-2AQ; abrogates DSB-focus formation by chk1, but not crb2; when associated with A-80." evidence="13">
    <original>T</original>
    <variation>A</variation>
    <location>
        <position position="73"/>
    </location>
</feature>
<feature type="mutagenesis site" description="In crb2-2AQ; abrogates DSB-focus formation by chk1, but not crb2; when associated with A-73." evidence="13">
    <original>S</original>
    <variation>A</variation>
    <location>
        <position position="80"/>
    </location>
</feature>
<feature type="mutagenesis site" description="Abolishes formation of radiation-induced crb2 foci at DSB sites. Severely impairs checkpoint response after DNA damage." evidence="14">
    <original>V</original>
    <variation>A</variation>
    <location>
        <position position="184"/>
    </location>
</feature>
<feature type="mutagenesis site" description="Abolishes formation of radiation-induced crb2 foci at DSB sites. Severely impairs checkpoint response after DNA damage." evidence="14">
    <original>T</original>
    <variation>A</variation>
    <location>
        <position position="187"/>
    </location>
</feature>
<feature type="mutagenesis site" description="Transforms T-187 into a consensus CDK phosphorylation site and abolishes the dependence of T-187 phosphorylation on prior phosphorylation at T-215 and T-235." evidence="14">
    <original>V</original>
    <variation>P</variation>
    <location>
        <position position="188"/>
    </location>
</feature>
<feature type="mutagenesis site" description="Reduces hyper-phosphorylation in response to DNA damage. Abolishes formation of radiation-induced crb2 foci at DSB sites. Impairs checkpoint response after DNA damage." evidence="7 14">
    <original>T</original>
    <variation>A</variation>
    <location>
        <position position="215"/>
    </location>
</feature>
<feature type="mutagenesis site" description="Abolishes formation of radiation-induced crb2 foci at DSB sites. Impairs checkpoint response after DNA damage." evidence="8 14">
    <original>T</original>
    <variation>A</variation>
    <location>
        <position position="235"/>
    </location>
</feature>
<feature type="mutagenesis site" description="Sensitive to DNA damage agent camptothecin (CPT)." evidence="15">
    <original>F</original>
    <variation>A</variation>
    <location>
        <position position="400"/>
    </location>
</feature>
<feature type="mutagenesis site" description="Disrupts gamma-H2A binding, but has no effect on dimer formation." evidence="10">
    <original>R</original>
    <variation>E</variation>
    <location>
        <position position="616"/>
    </location>
</feature>
<feature type="mutagenesis site" description="Disrupts gamma-H2A binding, but has no effect on dimer formation." evidence="10">
    <original>K</original>
    <variation>E</variation>
    <location>
        <position position="617"/>
    </location>
</feature>
<feature type="mutagenesis site" description="Disrupts gamma-H2A binding, but has no effect on dimer formation." evidence="10">
    <original>K</original>
    <variation>E</variation>
    <location>
        <position position="619"/>
    </location>
</feature>
<feature type="mutagenesis site" description="Disrupts dimer formation, but not gamma-H2A binding." evidence="10">
    <original>C</original>
    <variation>R</variation>
    <location>
        <position position="663"/>
    </location>
</feature>
<feature type="mutagenesis site" description="Disrupts dimer formation, but not gamma-H2A binding." evidence="10">
    <original>S</original>
    <variation>R</variation>
    <location>
        <position position="666"/>
    </location>
</feature>
<feature type="sequence conflict" description="In Ref. 2; BAA13093." evidence="21" ref="2">
    <original>F</original>
    <variation>C</variation>
    <location>
        <position position="76"/>
    </location>
</feature>
<feature type="sequence conflict" description="In Ref. 2; BAA13093." evidence="21" ref="2">
    <original>F</original>
    <variation>C</variation>
    <location>
        <position position="84"/>
    </location>
</feature>
<feature type="sequence conflict" description="In Ref. 2; BAA13093." evidence="21" ref="2">
    <original>LK</original>
    <variation>YR</variation>
    <location>
        <begin position="162"/>
        <end position="163"/>
    </location>
</feature>
<feature type="strand" evidence="30">
    <location>
        <begin position="182"/>
        <end position="184"/>
    </location>
</feature>
<feature type="helix" evidence="31">
    <location>
        <begin position="237"/>
        <end position="239"/>
    </location>
</feature>
<feature type="helix" evidence="27">
    <location>
        <begin position="362"/>
        <end position="364"/>
    </location>
</feature>
<feature type="strand" evidence="27">
    <location>
        <begin position="365"/>
        <end position="369"/>
    </location>
</feature>
<feature type="strand" evidence="27">
    <location>
        <begin position="372"/>
        <end position="374"/>
    </location>
</feature>
<feature type="strand" evidence="27">
    <location>
        <begin position="377"/>
        <end position="386"/>
    </location>
</feature>
<feature type="strand" evidence="27">
    <location>
        <begin position="395"/>
        <end position="400"/>
    </location>
</feature>
<feature type="strand" evidence="27">
    <location>
        <begin position="405"/>
        <end position="409"/>
    </location>
</feature>
<feature type="strand" evidence="27">
    <location>
        <begin position="412"/>
        <end position="416"/>
    </location>
</feature>
<feature type="strand" evidence="27">
    <location>
        <begin position="423"/>
        <end position="426"/>
    </location>
</feature>
<feature type="strand" evidence="27">
    <location>
        <begin position="434"/>
        <end position="440"/>
    </location>
</feature>
<feature type="helix" evidence="27">
    <location>
        <begin position="449"/>
        <end position="451"/>
    </location>
</feature>
<feature type="strand" evidence="27">
    <location>
        <begin position="459"/>
        <end position="464"/>
    </location>
</feature>
<feature type="strand" evidence="27">
    <location>
        <begin position="467"/>
        <end position="472"/>
    </location>
</feature>
<feature type="helix" evidence="27">
    <location>
        <begin position="473"/>
        <end position="475"/>
    </location>
</feature>
<feature type="strand" evidence="27">
    <location>
        <begin position="476"/>
        <end position="478"/>
    </location>
</feature>
<feature type="helix" evidence="27">
    <location>
        <begin position="480"/>
        <end position="483"/>
    </location>
</feature>
<feature type="turn" evidence="28">
    <location>
        <begin position="539"/>
        <end position="542"/>
    </location>
</feature>
<feature type="strand" evidence="28">
    <location>
        <begin position="543"/>
        <end position="547"/>
    </location>
</feature>
<feature type="helix" evidence="28">
    <location>
        <begin position="558"/>
        <end position="567"/>
    </location>
</feature>
<feature type="helix" evidence="28">
    <location>
        <begin position="578"/>
        <end position="580"/>
    </location>
</feature>
<feature type="turn" evidence="29">
    <location>
        <begin position="584"/>
        <end position="587"/>
    </location>
</feature>
<feature type="helix" evidence="28">
    <location>
        <begin position="599"/>
        <end position="603"/>
    </location>
</feature>
<feature type="strand" evidence="28">
    <location>
        <begin position="605"/>
        <end position="610"/>
    </location>
</feature>
<feature type="helix" evidence="28">
    <location>
        <begin position="618"/>
        <end position="626"/>
    </location>
</feature>
<feature type="helix" evidence="28">
    <location>
        <begin position="634"/>
        <end position="642"/>
    </location>
</feature>
<feature type="helix" evidence="28">
    <location>
        <begin position="649"/>
        <end position="651"/>
    </location>
</feature>
<feature type="strand" evidence="28">
    <location>
        <begin position="652"/>
        <end position="658"/>
    </location>
</feature>
<feature type="turn" evidence="28">
    <location>
        <begin position="659"/>
        <end position="662"/>
    </location>
</feature>
<feature type="strand" evidence="28">
    <location>
        <begin position="663"/>
        <end position="666"/>
    </location>
</feature>
<feature type="helix" evidence="28">
    <location>
        <begin position="678"/>
        <end position="684"/>
    </location>
</feature>
<feature type="turn" evidence="28">
    <location>
        <begin position="688"/>
        <end position="691"/>
    </location>
</feature>
<feature type="strand" evidence="28">
    <location>
        <begin position="693"/>
        <end position="696"/>
    </location>
</feature>
<feature type="helix" evidence="28">
    <location>
        <begin position="714"/>
        <end position="726"/>
    </location>
</feature>
<feature type="strand" evidence="28">
    <location>
        <begin position="730"/>
        <end position="732"/>
    </location>
</feature>
<feature type="strand" evidence="28">
    <location>
        <begin position="743"/>
        <end position="746"/>
    </location>
</feature>
<feature type="strand" evidence="28">
    <location>
        <begin position="748"/>
        <end position="750"/>
    </location>
</feature>
<feature type="helix" evidence="28">
    <location>
        <begin position="763"/>
        <end position="772"/>
    </location>
</feature>
<comment type="function">
    <text evidence="6 8 11 12 13 16 17">Essential for cell cycle arrest at the G1 and G2 stages following DNA damage by X-, and UV-irradiation, or inactivation of DNA ligase. Plays a role in the response to DNA damage (PubMed:9153313, PubMed:9407031). Interaction with rad4 via its phosphorylation sites in the N-terminus couples the DNA checkpoint apparatus to chromatin via interaction of its C-terminal BRCT domains with epigenetic modifications on histones H4 and H2A, respectively, in the G1/S phase of the cell cycle, and facilitates recruitment of the checkpoint kinase chk1 (PubMed:15550243, PubMed:16778077, PubMed:18826944, PubMed:20679485, PubMed:22792081).</text>
</comment>
<comment type="subunit">
    <text evidence="4 5 8 9 10 11 12 14 17 23">Homodimer. Dimerization is mediated via the BRCT domain (PubMed:16778077, PubMed:18676809). Interacts (via BRCT domain) with rad3 (PubMed:14739927). Interacts with rad4 (via BRCT1,2 domains) (PubMed:9407031, PubMed:14739927); a single rad4 molecule interacts simultaneously with both Thr-187 phosphorylation sites in a crb2 dimer (PubMed:24074952). Interacts (via Tudor domain) with histone H4K20me2 (PubMed:17190600, PubMed:18826944). Interacts (via BRCT dmain) with histone H2AS128ph (gamma-H2A) (PubMed:18676809, PubMed:20679485). Interacts with chk1 (PubMed:14739927, PubMed:22792081, PubMed:9407031). Interacts with sad1 (PubMed:14655046).</text>
</comment>
<comment type="interaction">
    <interactant intactId="EBI-768448">
        <id>P87074</id>
    </interactant>
    <interactant intactId="EBI-768535">
        <id>P34208</id>
        <label>chk1</label>
    </interactant>
    <organismsDiffer>false</organismsDiffer>
    <experiments>4</experiments>
</comment>
<comment type="interaction">
    <interactant intactId="EBI-768448">
        <id>P87074</id>
    </interactant>
    <interactant intactId="EBI-768448">
        <id>P87074</id>
        <label>crb2</label>
    </interactant>
    <organismsDiffer>false</organismsDiffer>
    <experiments>3</experiments>
</comment>
<comment type="interaction">
    <interactant intactId="EBI-768448">
        <id>P87074</id>
    </interactant>
    <interactant intactId="EBI-768555">
        <id>Q02099</id>
        <label>rad3</label>
    </interactant>
    <organismsDiffer>false</organismsDiffer>
    <experiments>3</experiments>
</comment>
<comment type="interaction">
    <interactant intactId="EBI-768448">
        <id>P87074</id>
    </interactant>
    <interactant intactId="EBI-768521">
        <id>P32372</id>
        <label>rad4</label>
    </interactant>
    <organismsDiffer>false</organismsDiffer>
    <experiments>2</experiments>
</comment>
<comment type="subcellular location">
    <subcellularLocation>
        <location evidence="4 6 17">Nucleus</location>
    </subcellularLocation>
    <text evidence="11 12 14">Recruited to sites of DNA damage, such as double stand breaks.</text>
</comment>
<comment type="domain">
    <text evidence="22">The Tudor-like region mediates binding to H4K20me2.</text>
</comment>
<comment type="PTM">
    <text evidence="23 24">Phosphorylation of Thr-73 and Ser-80 by rad3/ATM promotes interaction with chk1 (PubMed:22792081). Phosphorylation at Thr-187 is dependent on phosphorylation at Thr-215 and Thr-235. Phosphorylation at Thr-215 and Thr-235 may prime the non-canonical Thr-187 site for cdc2/CDK phosphorylation (PubMed:24074952).</text>
</comment>
<comment type="disruption phenotype">
    <text evidence="15">Not resistant to the microtubule depolymerizing drug thiabendazole (TBZ). DNA damage sensitive in response to ionizing radiation (IR), ultraviolet (UV), hydroxyurea (HU) and camptothecin (CPT).</text>
</comment>
<proteinExistence type="evidence at protein level"/>
<sequence length="778" mass="87462">MEVNDTSLHKGFGLDINSQRVFGAQAAISRNNYSKVNASINPSPPRSNDNSNKEFSYSKDVNNNGAVEELSLTQLFEVPSQAAFAKQSSQDISDDELIQHDSRKVISSPYSPKQTHTVLKRLYDRQSVISDHEKLLTPQNVSNSSQILSPFTSLLPSTLSTLKDTPLSVSQNEKNLETVGEVLVPETVAQHRTKFYDYTLDEMENETESGQVETTPTRLATSLGSPVLYGRVESTPPAFLPETSEKQYKRKFSFTEPSSEKVDNTETKFSKKTKNINDENFPNPFNVISSYETSASPSTVIDQSSQVSSIFVNKRLRKSVNNQAISRSDSLSLDTPKIDSLFTRASIKPLKPSQSPNSRRSFKNRVLAFFKGYPSFYYPATLVAPVHSAVTSSIMYKVQFDDATMSTVNSNQIKRFFLKKGDVVQSTRLGKIKHTVVKTFRSTNEQLSLIAVDALNNDMVILAHGEIEVTVPISTIYVAPVNIRRFQGRDLSFSTLKDMKFEETSFLPSHDSQRNRSSLKERDSSFVKKNLDSESNQLIFDDCVFAFSGPVHEDAYDRSALETVVQDHGGLVLDTGLRPLFNDPFKSKQKKLRHLKPQKRSKSWNQAFVVSDTFSRKVKYLEALAFNIPCVHPQFIKQCLKMNRVVDFSPYLLASGYSHRLDCTLSQRIEPFDTTDSLYDRLLARKGPLFGKKILFIIPEAKSWQKKIENTEQGQKALAHVYHALALGADVEIRPNVAHLECDLILTMDGNIVDETNCPVVDPEWIVECLISQSDIST</sequence>
<organism>
    <name type="scientific">Schizosaccharomyces pombe (strain 972 / ATCC 24843)</name>
    <name type="common">Fission yeast</name>
    <dbReference type="NCBI Taxonomy" id="284812"/>
    <lineage>
        <taxon>Eukaryota</taxon>
        <taxon>Fungi</taxon>
        <taxon>Dikarya</taxon>
        <taxon>Ascomycota</taxon>
        <taxon>Taphrinomycotina</taxon>
        <taxon>Schizosaccharomycetes</taxon>
        <taxon>Schizosaccharomycetales</taxon>
        <taxon>Schizosaccharomycetaceae</taxon>
        <taxon>Schizosaccharomyces</taxon>
    </lineage>
</organism>
<evidence type="ECO:0000255" key="1">
    <source>
        <dbReference type="PROSITE-ProRule" id="PRU00033"/>
    </source>
</evidence>
<evidence type="ECO:0000256" key="2">
    <source>
        <dbReference type="SAM" id="MobiDB-lite"/>
    </source>
</evidence>
<evidence type="ECO:0000269" key="3">
    <source>
    </source>
</evidence>
<evidence type="ECO:0000269" key="4">
    <source>
    </source>
</evidence>
<evidence type="ECO:0000269" key="5">
    <source>
    </source>
</evidence>
<evidence type="ECO:0000269" key="6">
    <source>
    </source>
</evidence>
<evidence type="ECO:0000269" key="7">
    <source>
    </source>
</evidence>
<evidence type="ECO:0000269" key="8">
    <source>
    </source>
</evidence>
<evidence type="ECO:0000269" key="9">
    <source>
    </source>
</evidence>
<evidence type="ECO:0000269" key="10">
    <source>
    </source>
</evidence>
<evidence type="ECO:0000269" key="11">
    <source>
    </source>
</evidence>
<evidence type="ECO:0000269" key="12">
    <source>
    </source>
</evidence>
<evidence type="ECO:0000269" key="13">
    <source>
    </source>
</evidence>
<evidence type="ECO:0000269" key="14">
    <source>
    </source>
</evidence>
<evidence type="ECO:0000269" key="15">
    <source>
    </source>
</evidence>
<evidence type="ECO:0000269" key="16">
    <source>
    </source>
</evidence>
<evidence type="ECO:0000269" key="17">
    <source>
    </source>
</evidence>
<evidence type="ECO:0000303" key="18">
    <source>
    </source>
</evidence>
<evidence type="ECO:0000303" key="19">
    <source>
    </source>
</evidence>
<evidence type="ECO:0000303" key="20">
    <source>
    </source>
</evidence>
<evidence type="ECO:0000305" key="21"/>
<evidence type="ECO:0000305" key="22">
    <source>
    </source>
</evidence>
<evidence type="ECO:0000305" key="23">
    <source>
    </source>
</evidence>
<evidence type="ECO:0000305" key="24">
    <source>
    </source>
</evidence>
<evidence type="ECO:0000305" key="25">
    <source>
    </source>
</evidence>
<evidence type="ECO:0000312" key="26">
    <source>
        <dbReference type="PomBase" id="SPBC342.05"/>
    </source>
</evidence>
<evidence type="ECO:0007829" key="27">
    <source>
        <dbReference type="PDB" id="2FHD"/>
    </source>
</evidence>
<evidence type="ECO:0007829" key="28">
    <source>
        <dbReference type="PDB" id="2VXB"/>
    </source>
</evidence>
<evidence type="ECO:0007829" key="29">
    <source>
        <dbReference type="PDB" id="2VXC"/>
    </source>
</evidence>
<evidence type="ECO:0007829" key="30">
    <source>
        <dbReference type="PDB" id="4BU0"/>
    </source>
</evidence>
<evidence type="ECO:0007829" key="31">
    <source>
        <dbReference type="PDB" id="4BU1"/>
    </source>
</evidence>
<protein>
    <recommendedName>
        <fullName evidence="25">DNA repair protein crb2</fullName>
    </recommendedName>
    <alternativeName>
        <fullName evidence="18">Checkpoint mediator protein crb2</fullName>
    </alternativeName>
    <alternativeName>
        <fullName evidence="20">Cut5-repeat binding protein 2</fullName>
    </alternativeName>
    <alternativeName>
        <fullName evidence="19">RAD9 protein homolog</fullName>
    </alternativeName>
</protein>
<gene>
    <name evidence="20" type="primary">crb2</name>
    <name evidence="19" type="synonym">rhp9</name>
    <name evidence="26" type="ORF">SPBC342.05</name>
</gene>
<reference key="1">
    <citation type="journal article" date="1997" name="Nucleic Acids Res.">
        <title>Isolation and characterization of the Schizosaccharomyces pombe rhp9 gene: a gene required for the DNA damage checkpoint but not the replication checkpoint.</title>
        <authorList>
            <person name="Willson J."/>
            <person name="Wilson S."/>
            <person name="Warr N."/>
            <person name="Watts F.Z."/>
        </authorList>
    </citation>
    <scope>NUCLEOTIDE SEQUENCE [GENOMIC DNA]</scope>
    <scope>FUNCTION</scope>
    <source>
        <strain>972 / ATCC 24843</strain>
    </source>
</reference>
<reference key="2">
    <citation type="journal article" date="1997" name="Genes Dev.">
        <title>Damage and replication checkpoint control in fission yeast is ensured by interactions of Crb2, a protein with BRCT motif, with Cut5 and Chk1.</title>
        <authorList>
            <person name="Saka Y."/>
            <person name="Esashi F."/>
            <person name="Matsusaka T."/>
            <person name="Mochida S."/>
            <person name="Yanagida M."/>
        </authorList>
    </citation>
    <scope>NUCLEOTIDE SEQUENCE [GENOMIC DNA]</scope>
    <scope>FUNCTION</scope>
    <scope>SUBCELLULAR LOCATION</scope>
    <scope>PHOSPHORYLATION</scope>
    <scope>INTERACTION WITH RAD4 AND CHK1</scope>
    <source>
        <strain>972 / ATCC 24843</strain>
    </source>
</reference>
<reference key="3">
    <citation type="journal article" date="2002" name="Nature">
        <title>The genome sequence of Schizosaccharomyces pombe.</title>
        <authorList>
            <person name="Wood V."/>
            <person name="Gwilliam R."/>
            <person name="Rajandream M.A."/>
            <person name="Lyne M.H."/>
            <person name="Lyne R."/>
            <person name="Stewart A."/>
            <person name="Sgouros J.G."/>
            <person name="Peat N."/>
            <person name="Hayles J."/>
            <person name="Baker S.G."/>
            <person name="Basham D."/>
            <person name="Bowman S."/>
            <person name="Brooks K."/>
            <person name="Brown D."/>
            <person name="Brown S."/>
            <person name="Chillingworth T."/>
            <person name="Churcher C.M."/>
            <person name="Collins M."/>
            <person name="Connor R."/>
            <person name="Cronin A."/>
            <person name="Davis P."/>
            <person name="Feltwell T."/>
            <person name="Fraser A."/>
            <person name="Gentles S."/>
            <person name="Goble A."/>
            <person name="Hamlin N."/>
            <person name="Harris D.E."/>
            <person name="Hidalgo J."/>
            <person name="Hodgson G."/>
            <person name="Holroyd S."/>
            <person name="Hornsby T."/>
            <person name="Howarth S."/>
            <person name="Huckle E.J."/>
            <person name="Hunt S."/>
            <person name="Jagels K."/>
            <person name="James K.D."/>
            <person name="Jones L."/>
            <person name="Jones M."/>
            <person name="Leather S."/>
            <person name="McDonald S."/>
            <person name="McLean J."/>
            <person name="Mooney P."/>
            <person name="Moule S."/>
            <person name="Mungall K.L."/>
            <person name="Murphy L.D."/>
            <person name="Niblett D."/>
            <person name="Odell C."/>
            <person name="Oliver K."/>
            <person name="O'Neil S."/>
            <person name="Pearson D."/>
            <person name="Quail M.A."/>
            <person name="Rabbinowitsch E."/>
            <person name="Rutherford K.M."/>
            <person name="Rutter S."/>
            <person name="Saunders D."/>
            <person name="Seeger K."/>
            <person name="Sharp S."/>
            <person name="Skelton J."/>
            <person name="Simmonds M.N."/>
            <person name="Squares R."/>
            <person name="Squares S."/>
            <person name="Stevens K."/>
            <person name="Taylor K."/>
            <person name="Taylor R.G."/>
            <person name="Tivey A."/>
            <person name="Walsh S.V."/>
            <person name="Warren T."/>
            <person name="Whitehead S."/>
            <person name="Woodward J.R."/>
            <person name="Volckaert G."/>
            <person name="Aert R."/>
            <person name="Robben J."/>
            <person name="Grymonprez B."/>
            <person name="Weltjens I."/>
            <person name="Vanstreels E."/>
            <person name="Rieger M."/>
            <person name="Schaefer M."/>
            <person name="Mueller-Auer S."/>
            <person name="Gabel C."/>
            <person name="Fuchs M."/>
            <person name="Duesterhoeft A."/>
            <person name="Fritzc C."/>
            <person name="Holzer E."/>
            <person name="Moestl D."/>
            <person name="Hilbert H."/>
            <person name="Borzym K."/>
            <person name="Langer I."/>
            <person name="Beck A."/>
            <person name="Lehrach H."/>
            <person name="Reinhardt R."/>
            <person name="Pohl T.M."/>
            <person name="Eger P."/>
            <person name="Zimmermann W."/>
            <person name="Wedler H."/>
            <person name="Wambutt R."/>
            <person name="Purnelle B."/>
            <person name="Goffeau A."/>
            <person name="Cadieu E."/>
            <person name="Dreano S."/>
            <person name="Gloux S."/>
            <person name="Lelaure V."/>
            <person name="Mottier S."/>
            <person name="Galibert F."/>
            <person name="Aves S.J."/>
            <person name="Xiang Z."/>
            <person name="Hunt C."/>
            <person name="Moore K."/>
            <person name="Hurst S.M."/>
            <person name="Lucas M."/>
            <person name="Rochet M."/>
            <person name="Gaillardin C."/>
            <person name="Tallada V.A."/>
            <person name="Garzon A."/>
            <person name="Thode G."/>
            <person name="Daga R.R."/>
            <person name="Cruzado L."/>
            <person name="Jimenez J."/>
            <person name="Sanchez M."/>
            <person name="del Rey F."/>
            <person name="Benito J."/>
            <person name="Dominguez A."/>
            <person name="Revuelta J.L."/>
            <person name="Moreno S."/>
            <person name="Armstrong J."/>
            <person name="Forsburg S.L."/>
            <person name="Cerutti L."/>
            <person name="Lowe T."/>
            <person name="McCombie W.R."/>
            <person name="Paulsen I."/>
            <person name="Potashkin J."/>
            <person name="Shpakovski G.V."/>
            <person name="Ussery D."/>
            <person name="Barrell B.G."/>
            <person name="Nurse P."/>
        </authorList>
    </citation>
    <scope>NUCLEOTIDE SEQUENCE [LARGE SCALE GENOMIC DNA]</scope>
    <source>
        <strain>972 / ATCC 24843</strain>
    </source>
</reference>
<reference key="4">
    <citation type="journal article" date="1999" name="Mol. Cell">
        <title>Cdc2 phosphorylation of Crb2 is required for reestablishing cell cycle progression after the damage checkpoint.</title>
        <authorList>
            <person name="Esashi F."/>
            <person name="Yanagida M."/>
        </authorList>
    </citation>
    <scope>PHOSPHORYLATION AT THR-215 BY CDC2</scope>
</reference>
<reference key="5">
    <citation type="journal article" date="2004" name="Mol. Genet. Genomics">
        <title>Two-hybrid search for proteins that interact with Sad1 and Kms1, two membrane-bound components of the spindle pole body in fission yeast.</title>
        <authorList>
            <person name="Miki F."/>
            <person name="Kurabayashi A."/>
            <person name="Tange Y."/>
            <person name="Okazaki K."/>
            <person name="Shimanuki M."/>
            <person name="Niwa O."/>
        </authorList>
    </citation>
    <scope>INTERACTION WITH SAD1</scope>
    <scope>SUBCELLULAR LOCATION</scope>
</reference>
<reference key="6">
    <citation type="journal article" date="2004" name="Cell">
        <title>Methylation of histone H4 lysine 20 controls recruitment of Crb2 to sites of DNA damage.</title>
        <authorList>
            <person name="Sanders S.L."/>
            <person name="Portoso M."/>
            <person name="Mata J."/>
            <person name="Baehler J."/>
            <person name="Allshire R.C."/>
            <person name="Kouzarides T."/>
        </authorList>
    </citation>
    <scope>FUNCTION</scope>
    <scope>SUBCELLULAR LOCATION</scope>
    <scope>PHOSPHORYLATION</scope>
</reference>
<reference key="7">
    <citation type="journal article" date="2004" name="EMBO J.">
        <title>Regulation of checkpoint kinases through dynamic interaction with Crb2.</title>
        <authorList>
            <person name="Mochida S."/>
            <person name="Esashi F."/>
            <person name="Aono N."/>
            <person name="Tamai K."/>
            <person name="O'Connell M.J."/>
            <person name="Yanagida M."/>
        </authorList>
    </citation>
    <scope>INTERACTION WITH CHK1; RAD3 AND RAD4</scope>
</reference>
<reference key="8">
    <citation type="journal article" date="2005" name="Mol. Cell. Biol.">
        <title>Cooperative control of Crb2 by ATM family and Cdc2 kinases is essential for the DNA damage checkpoint in fission yeast.</title>
        <authorList>
            <person name="Nakamura T.M."/>
            <person name="Moser B.A."/>
            <person name="Du L.-L."/>
            <person name="Russell P."/>
        </authorList>
    </citation>
    <scope>PHOSPHORYLATION AT THR-215</scope>
    <scope>MUTAGENESIS OF THR-215</scope>
</reference>
<reference key="9">
    <citation type="journal article" date="2006" name="Genes Dev.">
        <title>Histone modification-dependent and -independent pathways for recruitment of checkpoint protein Crb2 to double-strand breaks.</title>
        <authorList>
            <person name="Du L.L."/>
            <person name="Nakamura T.M."/>
            <person name="Russell P."/>
        </authorList>
    </citation>
    <scope>FUNCTION</scope>
    <scope>MUTAGENESIS OF THR-235</scope>
</reference>
<reference key="10">
    <citation type="journal article" date="2008" name="J. Biol. Chem.">
        <title>Di-methyl H4 lysine 20 targets the checkpoint protein Crb2 to sites of DNA damage.</title>
        <authorList>
            <person name="Greeson N.T."/>
            <person name="Sengupta R."/>
            <person name="Arida A.R."/>
            <person name="Jenuwein T."/>
            <person name="Sanders S.L."/>
        </authorList>
    </citation>
    <scope>FUNCTION</scope>
    <scope>SUBCELLULAR LOCATION</scope>
    <scope>INTERACTION WITH HISTONE H4</scope>
</reference>
<reference key="11">
    <citation type="journal article" date="2010" name="Mol. Cell. Biol.">
        <title>BRCT domain interactions with phospho-histone H2A target Crb2 to chromatin at double-strand breaks and maintain the DNA damage checkpoint.</title>
        <authorList>
            <person name="Sofueva S."/>
            <person name="Du L.L."/>
            <person name="Limbo O."/>
            <person name="Williams J.S."/>
            <person name="Russell P."/>
        </authorList>
    </citation>
    <scope>FUNCTION</scope>
    <scope>SUBCELLULAR LOCATION</scope>
    <scope>INTERACTION WITH HISTONE H2A</scope>
</reference>
<reference key="12">
    <citation type="journal article" date="2012" name="PLoS Genet.">
        <title>Phosphorylation-dependent interactions between Crb2 and Chk1 are essential for DNA damage checkpoint.</title>
        <authorList>
            <person name="Qu M."/>
            <person name="Yang B."/>
            <person name="Tao L."/>
            <person name="Yates J.R."/>
            <person name="Russell P."/>
            <person name="Dong M.Q."/>
            <person name="Du L.L."/>
        </authorList>
    </citation>
    <scope>FUNCTION</scope>
    <scope>INTERACTION WITH CHK1</scope>
    <scope>PHOSPHORYLATION AT THR-73 AND SER-80</scope>
</reference>
<reference key="13">
    <citation type="journal article" date="2014" name="PLoS ONE">
        <title>Mdb1, a fission yeast homolog of human MDC1, modulates DNA damage response and mitotic spindle function.</title>
        <authorList>
            <person name="Wei Y."/>
            <person name="Wang H.T."/>
            <person name="Zhai Y."/>
            <person name="Russell P."/>
            <person name="Du L.L."/>
        </authorList>
    </citation>
    <scope>DISRUPTION PHENOTYPE</scope>
    <scope>MUTAGENESIS OF PHE-400</scope>
</reference>
<reference key="14">
    <citation type="journal article" date="2006" name="Cell">
        <title>Structural basis for the methylation state-specific recognition of histone H4-K20 by 53BP1 and Crb2 in DNA repair.</title>
        <authorList>
            <person name="Botuyan M.V."/>
            <person name="Lee J."/>
            <person name="Ward I.M."/>
            <person name="Kim J.-E."/>
            <person name="Thompson J.R."/>
            <person name="Chen J."/>
            <person name="Mer G."/>
        </authorList>
    </citation>
    <scope>X-RAY CRYSTALLOGRAPHY (2.4 ANGSTROMS) OF 358-507</scope>
    <scope>INTERACTION WITH HISTONE H4</scope>
</reference>
<reference key="15">
    <citation type="journal article" date="2008" name="Genes Dev.">
        <title>Structural and functional analysis of the Crb2-BRCT2 domain reveals distinct roles in checkpoint signaling and DNA damage repair.</title>
        <authorList>
            <person name="Kilkenny M.L."/>
            <person name="Dore A.S."/>
            <person name="Roe S.M."/>
            <person name="Nestoras K."/>
            <person name="Ho J.C."/>
            <person name="Watts F.Z."/>
            <person name="Pearl L.H."/>
        </authorList>
    </citation>
    <scope>X-RAY CRYSTALLOGRAPHY (2.30 ANGSTROMS) OF 537-778 IN COMPLEX WITH HISTONE H2A</scope>
    <scope>SUBUNIT</scope>
    <scope>MUTAGENESIS OF ARG-616; LYS-617; LYS-619; CYS-663 AND SER-666</scope>
</reference>
<reference key="16">
    <citation type="journal article" date="2013" name="Mol. Cell">
        <title>Phosphorylation-dependent assembly and coordination of the DNA damage checkpoint apparatus by Rad4(TopBP1).</title>
        <authorList>
            <person name="Qu M."/>
            <person name="Rappas M."/>
            <person name="Wardlaw C.P."/>
            <person name="Garcia V."/>
            <person name="Ren J.Y."/>
            <person name="Day M."/>
            <person name="Carr A.M."/>
            <person name="Oliver A.W."/>
            <person name="Du L.L."/>
            <person name="Pearl L.H."/>
        </authorList>
    </citation>
    <scope>X-RAY CRYSTALLOGRAPHY (1.50 ANGSTROMS) OF 180-193 AND OF 229-241</scope>
    <scope>SUBCELLULAR LOCATION</scope>
    <scope>PHOSPHORYLATION AT THR-187; THR-215 AND THR-235</scope>
    <scope>INTERACTION WITH RAD4</scope>
    <scope>MUTAGENESIS OF VAL-184; THR-187; THR-215 AND THR-235</scope>
</reference>
<keyword id="KW-0002">3D-structure</keyword>
<keyword id="KW-0131">Cell cycle</keyword>
<keyword id="KW-0227">DNA damage</keyword>
<keyword id="KW-0236">DNA replication inhibitor</keyword>
<keyword id="KW-0539">Nucleus</keyword>
<keyword id="KW-0597">Phosphoprotein</keyword>
<keyword id="KW-1185">Reference proteome</keyword>